<feature type="chain" id="PRO_0000181562" description="Large ribosomal subunit protein bL25">
    <location>
        <begin position="1"/>
        <end position="212"/>
    </location>
</feature>
<reference key="1">
    <citation type="journal article" date="2003" name="Nature">
        <title>Unique physiological and pathogenic features of Leptospira interrogans revealed by whole-genome sequencing.</title>
        <authorList>
            <person name="Ren S.-X."/>
            <person name="Fu G."/>
            <person name="Jiang X.-G."/>
            <person name="Zeng R."/>
            <person name="Miao Y.-G."/>
            <person name="Xu H."/>
            <person name="Zhang Y.-X."/>
            <person name="Xiong H."/>
            <person name="Lu G."/>
            <person name="Lu L.-F."/>
            <person name="Jiang H.-Q."/>
            <person name="Jia J."/>
            <person name="Tu Y.-F."/>
            <person name="Jiang J.-X."/>
            <person name="Gu W.-Y."/>
            <person name="Zhang Y.-Q."/>
            <person name="Cai Z."/>
            <person name="Sheng H.-H."/>
            <person name="Yin H.-F."/>
            <person name="Zhang Y."/>
            <person name="Zhu G.-F."/>
            <person name="Wan M."/>
            <person name="Huang H.-L."/>
            <person name="Qian Z."/>
            <person name="Wang S.-Y."/>
            <person name="Ma W."/>
            <person name="Yao Z.-J."/>
            <person name="Shen Y."/>
            <person name="Qiang B.-Q."/>
            <person name="Xia Q.-C."/>
            <person name="Guo X.-K."/>
            <person name="Danchin A."/>
            <person name="Saint Girons I."/>
            <person name="Somerville R.L."/>
            <person name="Wen Y.-M."/>
            <person name="Shi M.-H."/>
            <person name="Chen Z."/>
            <person name="Xu J.-G."/>
            <person name="Zhao G.-P."/>
        </authorList>
    </citation>
    <scope>NUCLEOTIDE SEQUENCE [LARGE SCALE GENOMIC DNA]</scope>
    <source>
        <strain>56601</strain>
    </source>
</reference>
<evidence type="ECO:0000255" key="1">
    <source>
        <dbReference type="HAMAP-Rule" id="MF_01334"/>
    </source>
</evidence>
<evidence type="ECO:0000305" key="2"/>
<keyword id="KW-1185">Reference proteome</keyword>
<keyword id="KW-0687">Ribonucleoprotein</keyword>
<keyword id="KW-0689">Ribosomal protein</keyword>
<keyword id="KW-0694">RNA-binding</keyword>
<keyword id="KW-0699">rRNA-binding</keyword>
<accession>Q8EZN1</accession>
<organism>
    <name type="scientific">Leptospira interrogans serogroup Icterohaemorrhagiae serovar Lai (strain 56601)</name>
    <dbReference type="NCBI Taxonomy" id="189518"/>
    <lineage>
        <taxon>Bacteria</taxon>
        <taxon>Pseudomonadati</taxon>
        <taxon>Spirochaetota</taxon>
        <taxon>Spirochaetia</taxon>
        <taxon>Leptospirales</taxon>
        <taxon>Leptospiraceae</taxon>
        <taxon>Leptospira</taxon>
    </lineage>
</organism>
<proteinExistence type="inferred from homology"/>
<dbReference type="EMBL" id="AE010300">
    <property type="protein sequence ID" value="AAN51019.1"/>
    <property type="molecule type" value="Genomic_DNA"/>
</dbReference>
<dbReference type="RefSeq" id="NP_714001.1">
    <property type="nucleotide sequence ID" value="NC_004342.2"/>
</dbReference>
<dbReference type="RefSeq" id="WP_000081487.1">
    <property type="nucleotide sequence ID" value="NC_004342.2"/>
</dbReference>
<dbReference type="SMR" id="Q8EZN1"/>
<dbReference type="STRING" id="189518.LA_3821"/>
<dbReference type="PaxDb" id="189518-LA_3821"/>
<dbReference type="EnsemblBacteria" id="AAN51019">
    <property type="protein sequence ID" value="AAN51019"/>
    <property type="gene ID" value="LA_3821"/>
</dbReference>
<dbReference type="KEGG" id="lil:LA_3821"/>
<dbReference type="PATRIC" id="fig|189518.3.peg.3789"/>
<dbReference type="HOGENOM" id="CLU_075939_2_1_12"/>
<dbReference type="InParanoid" id="Q8EZN1"/>
<dbReference type="OrthoDB" id="9790002at2"/>
<dbReference type="Proteomes" id="UP000001408">
    <property type="component" value="Chromosome I"/>
</dbReference>
<dbReference type="GO" id="GO:0022625">
    <property type="term" value="C:cytosolic large ribosomal subunit"/>
    <property type="evidence" value="ECO:0000318"/>
    <property type="project" value="GO_Central"/>
</dbReference>
<dbReference type="GO" id="GO:0008097">
    <property type="term" value="F:5S rRNA binding"/>
    <property type="evidence" value="ECO:0000318"/>
    <property type="project" value="GO_Central"/>
</dbReference>
<dbReference type="GO" id="GO:0003735">
    <property type="term" value="F:structural constituent of ribosome"/>
    <property type="evidence" value="ECO:0007669"/>
    <property type="project" value="InterPro"/>
</dbReference>
<dbReference type="GO" id="GO:0006412">
    <property type="term" value="P:translation"/>
    <property type="evidence" value="ECO:0000318"/>
    <property type="project" value="GO_Central"/>
</dbReference>
<dbReference type="CDD" id="cd00495">
    <property type="entry name" value="Ribosomal_L25_TL5_CTC"/>
    <property type="match status" value="1"/>
</dbReference>
<dbReference type="FunFam" id="2.40.240.10:FF:000018">
    <property type="entry name" value="50S ribosomal protein L25"/>
    <property type="match status" value="1"/>
</dbReference>
<dbReference type="Gene3D" id="2.170.120.20">
    <property type="entry name" value="Ribosomal protein L25, beta domain"/>
    <property type="match status" value="1"/>
</dbReference>
<dbReference type="Gene3D" id="2.40.240.10">
    <property type="entry name" value="Ribosomal Protein L25, Chain P"/>
    <property type="match status" value="1"/>
</dbReference>
<dbReference type="HAMAP" id="MF_01334">
    <property type="entry name" value="Ribosomal_bL25_CTC"/>
    <property type="match status" value="1"/>
</dbReference>
<dbReference type="InterPro" id="IPR020056">
    <property type="entry name" value="Rbsml_bL25/Gln-tRNA_synth_N"/>
</dbReference>
<dbReference type="InterPro" id="IPR011035">
    <property type="entry name" value="Ribosomal_bL25/Gln-tRNA_synth"/>
</dbReference>
<dbReference type="InterPro" id="IPR020057">
    <property type="entry name" value="Ribosomal_bL25_b-dom"/>
</dbReference>
<dbReference type="InterPro" id="IPR037121">
    <property type="entry name" value="Ribosomal_bL25_C"/>
</dbReference>
<dbReference type="InterPro" id="IPR001021">
    <property type="entry name" value="Ribosomal_bL25_long"/>
</dbReference>
<dbReference type="InterPro" id="IPR029751">
    <property type="entry name" value="Ribosomal_L25_dom"/>
</dbReference>
<dbReference type="InterPro" id="IPR020930">
    <property type="entry name" value="Ribosomal_uL5_bac-type"/>
</dbReference>
<dbReference type="NCBIfam" id="TIGR00731">
    <property type="entry name" value="bL25_bact_ctc"/>
    <property type="match status" value="1"/>
</dbReference>
<dbReference type="NCBIfam" id="NF004136">
    <property type="entry name" value="PRK05618.3-2"/>
    <property type="match status" value="1"/>
</dbReference>
<dbReference type="PANTHER" id="PTHR33284">
    <property type="entry name" value="RIBOSOMAL PROTEIN L25/GLN-TRNA SYNTHETASE, ANTI-CODON-BINDING DOMAIN-CONTAINING PROTEIN"/>
    <property type="match status" value="1"/>
</dbReference>
<dbReference type="PANTHER" id="PTHR33284:SF1">
    <property type="entry name" value="RIBOSOMAL PROTEIN L25_GLN-TRNA SYNTHETASE, ANTI-CODON-BINDING DOMAIN-CONTAINING PROTEIN"/>
    <property type="match status" value="1"/>
</dbReference>
<dbReference type="Pfam" id="PF01386">
    <property type="entry name" value="Ribosomal_L25p"/>
    <property type="match status" value="1"/>
</dbReference>
<dbReference type="Pfam" id="PF14693">
    <property type="entry name" value="Ribosomal_TL5_C"/>
    <property type="match status" value="1"/>
</dbReference>
<dbReference type="SUPFAM" id="SSF50715">
    <property type="entry name" value="Ribosomal protein L25-like"/>
    <property type="match status" value="1"/>
</dbReference>
<name>RL25_LEPIN</name>
<sequence>MSQNTIHKIAVKKRTTTGKNENNRLRSSGMVPVNIIGGGVATSGAVNEKELEKMVHSGIRQSTLIELDVEGQGAQKVFVKEIQRFPEIDRIRHVDFYKVVPGQKIVTKIGIETTGIAKGSKTGGQFEHIIHEIRVKTIPEDLLENLTIDVTDLDVGDSIKISQLKVPTSWEILINGDPIVTSVNKTKALLAAERAEAKGSAADDAKAKKGKK</sequence>
<gene>
    <name evidence="1" type="primary">rplY</name>
    <name evidence="1" type="synonym">ctc</name>
    <name type="ordered locus">LA_3821</name>
</gene>
<comment type="function">
    <text evidence="1">This is one of the proteins that binds to the 5S RNA in the ribosome where it forms part of the central protuberance.</text>
</comment>
<comment type="subunit">
    <text evidence="1">Part of the 50S ribosomal subunit; part of the 5S rRNA/L5/L18/L25 subcomplex. Contacts the 5S rRNA. Binds to the 5S rRNA independently of L5 and L18.</text>
</comment>
<comment type="similarity">
    <text evidence="1">Belongs to the bacterial ribosomal protein bL25 family. CTC subfamily.</text>
</comment>
<protein>
    <recommendedName>
        <fullName evidence="1">Large ribosomal subunit protein bL25</fullName>
    </recommendedName>
    <alternativeName>
        <fullName evidence="2">50S ribosomal protein L25</fullName>
    </alternativeName>
    <alternativeName>
        <fullName evidence="1">General stress protein CTC</fullName>
    </alternativeName>
</protein>